<gene>
    <name evidence="1" type="primary">ispH</name>
    <name type="synonym">lytB</name>
    <name type="ordered locus">YPTB0620</name>
</gene>
<evidence type="ECO:0000255" key="1">
    <source>
        <dbReference type="HAMAP-Rule" id="MF_00191"/>
    </source>
</evidence>
<reference key="1">
    <citation type="journal article" date="2004" name="Proc. Natl. Acad. Sci. U.S.A.">
        <title>Insights into the evolution of Yersinia pestis through whole-genome comparison with Yersinia pseudotuberculosis.</title>
        <authorList>
            <person name="Chain P.S.G."/>
            <person name="Carniel E."/>
            <person name="Larimer F.W."/>
            <person name="Lamerdin J."/>
            <person name="Stoutland P.O."/>
            <person name="Regala W.M."/>
            <person name="Georgescu A.M."/>
            <person name="Vergez L.M."/>
            <person name="Land M.L."/>
            <person name="Motin V.L."/>
            <person name="Brubaker R.R."/>
            <person name="Fowler J."/>
            <person name="Hinnebusch J."/>
            <person name="Marceau M."/>
            <person name="Medigue C."/>
            <person name="Simonet M."/>
            <person name="Chenal-Francisque V."/>
            <person name="Souza B."/>
            <person name="Dacheux D."/>
            <person name="Elliott J.M."/>
            <person name="Derbise A."/>
            <person name="Hauser L.J."/>
            <person name="Garcia E."/>
        </authorList>
    </citation>
    <scope>NUCLEOTIDE SEQUENCE [LARGE SCALE GENOMIC DNA]</scope>
    <source>
        <strain>IP32953</strain>
    </source>
</reference>
<accession>Q66ES1</accession>
<protein>
    <recommendedName>
        <fullName evidence="1">4-hydroxy-3-methylbut-2-enyl diphosphate reductase</fullName>
        <shortName evidence="1">HMBPP reductase</shortName>
        <ecNumber evidence="1">1.17.7.4</ecNumber>
    </recommendedName>
</protein>
<sequence>MQILLANPRGFCAGVDRAISIVERAIEMYGAPIYVRHEVVHNRYVVESLCERGAIFIEEISEVPDGSILIFSAHGVSQAVRAEARSRNLTMLFDATCPLVTKVHMEVARASRKGKEAILIGHAGHPEVEGTMGQYSNPNGGMYLVESPDDVWQLNVKDENNLCFMTQTTLSVDDTSAVIDALNTRFPKIVGPRKDDICYATTNRQEAVRNLANDADIVLVVGSKNSSNSNRLAELVQRMGKPAYLIDSAADIQEFWLQGAQCIGVTAGASAPDILVQQVIARLKDLGAGESIELSGREENIVFEVPKELRVEVKQID</sequence>
<dbReference type="EC" id="1.17.7.4" evidence="1"/>
<dbReference type="EMBL" id="BX936398">
    <property type="protein sequence ID" value="CAH19860.1"/>
    <property type="molecule type" value="Genomic_DNA"/>
</dbReference>
<dbReference type="RefSeq" id="WP_011191701.1">
    <property type="nucleotide sequence ID" value="NC_006155.1"/>
</dbReference>
<dbReference type="SMR" id="Q66ES1"/>
<dbReference type="GeneID" id="49787377"/>
<dbReference type="KEGG" id="ypo:BZ17_1936"/>
<dbReference type="KEGG" id="yps:YPTB0620"/>
<dbReference type="PATRIC" id="fig|273123.14.peg.2059"/>
<dbReference type="UniPathway" id="UPA00056">
    <property type="reaction ID" value="UER00097"/>
</dbReference>
<dbReference type="UniPathway" id="UPA00059">
    <property type="reaction ID" value="UER00105"/>
</dbReference>
<dbReference type="Proteomes" id="UP000001011">
    <property type="component" value="Chromosome"/>
</dbReference>
<dbReference type="GO" id="GO:0051539">
    <property type="term" value="F:4 iron, 4 sulfur cluster binding"/>
    <property type="evidence" value="ECO:0007669"/>
    <property type="project" value="UniProtKB-UniRule"/>
</dbReference>
<dbReference type="GO" id="GO:0051745">
    <property type="term" value="F:4-hydroxy-3-methylbut-2-enyl diphosphate reductase activity"/>
    <property type="evidence" value="ECO:0007669"/>
    <property type="project" value="UniProtKB-UniRule"/>
</dbReference>
<dbReference type="GO" id="GO:0046872">
    <property type="term" value="F:metal ion binding"/>
    <property type="evidence" value="ECO:0007669"/>
    <property type="project" value="UniProtKB-KW"/>
</dbReference>
<dbReference type="GO" id="GO:0050992">
    <property type="term" value="P:dimethylallyl diphosphate biosynthetic process"/>
    <property type="evidence" value="ECO:0007669"/>
    <property type="project" value="UniProtKB-UniRule"/>
</dbReference>
<dbReference type="GO" id="GO:0019288">
    <property type="term" value="P:isopentenyl diphosphate biosynthetic process, methylerythritol 4-phosphate pathway"/>
    <property type="evidence" value="ECO:0007669"/>
    <property type="project" value="UniProtKB-UniRule"/>
</dbReference>
<dbReference type="GO" id="GO:0016114">
    <property type="term" value="P:terpenoid biosynthetic process"/>
    <property type="evidence" value="ECO:0007669"/>
    <property type="project" value="UniProtKB-UniRule"/>
</dbReference>
<dbReference type="CDD" id="cd13944">
    <property type="entry name" value="lytB_ispH"/>
    <property type="match status" value="1"/>
</dbReference>
<dbReference type="FunFam" id="3.40.50.11270:FF:000001">
    <property type="entry name" value="4-hydroxy-3-methylbut-2-enyl diphosphate reductase"/>
    <property type="match status" value="1"/>
</dbReference>
<dbReference type="Gene3D" id="3.40.50.11270">
    <property type="match status" value="1"/>
</dbReference>
<dbReference type="Gene3D" id="3.40.1010.20">
    <property type="entry name" value="4-hydroxy-3-methylbut-2-enyl diphosphate reductase, catalytic domain"/>
    <property type="match status" value="2"/>
</dbReference>
<dbReference type="HAMAP" id="MF_00191">
    <property type="entry name" value="IspH"/>
    <property type="match status" value="1"/>
</dbReference>
<dbReference type="InterPro" id="IPR003451">
    <property type="entry name" value="LytB/IspH"/>
</dbReference>
<dbReference type="NCBIfam" id="TIGR00216">
    <property type="entry name" value="ispH_lytB"/>
    <property type="match status" value="1"/>
</dbReference>
<dbReference type="NCBIfam" id="NF002188">
    <property type="entry name" value="PRK01045.1-2"/>
    <property type="match status" value="1"/>
</dbReference>
<dbReference type="NCBIfam" id="NF002190">
    <property type="entry name" value="PRK01045.1-4"/>
    <property type="match status" value="1"/>
</dbReference>
<dbReference type="PANTHER" id="PTHR30426">
    <property type="entry name" value="4-HYDROXY-3-METHYLBUT-2-ENYL DIPHOSPHATE REDUCTASE"/>
    <property type="match status" value="1"/>
</dbReference>
<dbReference type="PANTHER" id="PTHR30426:SF0">
    <property type="entry name" value="4-HYDROXY-3-METHYLBUT-2-ENYL DIPHOSPHATE REDUCTASE"/>
    <property type="match status" value="1"/>
</dbReference>
<dbReference type="Pfam" id="PF02401">
    <property type="entry name" value="LYTB"/>
    <property type="match status" value="1"/>
</dbReference>
<name>ISPH_YERPS</name>
<proteinExistence type="inferred from homology"/>
<organism>
    <name type="scientific">Yersinia pseudotuberculosis serotype I (strain IP32953)</name>
    <dbReference type="NCBI Taxonomy" id="273123"/>
    <lineage>
        <taxon>Bacteria</taxon>
        <taxon>Pseudomonadati</taxon>
        <taxon>Pseudomonadota</taxon>
        <taxon>Gammaproteobacteria</taxon>
        <taxon>Enterobacterales</taxon>
        <taxon>Yersiniaceae</taxon>
        <taxon>Yersinia</taxon>
    </lineage>
</organism>
<comment type="function">
    <text evidence="1">Catalyzes the conversion of 1-hydroxy-2-methyl-2-(E)-butenyl 4-diphosphate (HMBPP) into a mixture of isopentenyl diphosphate (IPP) and dimethylallyl diphosphate (DMAPP). Acts in the terminal step of the DOXP/MEP pathway for isoprenoid precursor biosynthesis.</text>
</comment>
<comment type="catalytic activity">
    <reaction evidence="1">
        <text>isopentenyl diphosphate + 2 oxidized [2Fe-2S]-[ferredoxin] + H2O = (2E)-4-hydroxy-3-methylbut-2-enyl diphosphate + 2 reduced [2Fe-2S]-[ferredoxin] + 2 H(+)</text>
        <dbReference type="Rhea" id="RHEA:24488"/>
        <dbReference type="Rhea" id="RHEA-COMP:10000"/>
        <dbReference type="Rhea" id="RHEA-COMP:10001"/>
        <dbReference type="ChEBI" id="CHEBI:15377"/>
        <dbReference type="ChEBI" id="CHEBI:15378"/>
        <dbReference type="ChEBI" id="CHEBI:33737"/>
        <dbReference type="ChEBI" id="CHEBI:33738"/>
        <dbReference type="ChEBI" id="CHEBI:128753"/>
        <dbReference type="ChEBI" id="CHEBI:128769"/>
        <dbReference type="EC" id="1.17.7.4"/>
    </reaction>
</comment>
<comment type="catalytic activity">
    <reaction evidence="1">
        <text>dimethylallyl diphosphate + 2 oxidized [2Fe-2S]-[ferredoxin] + H2O = (2E)-4-hydroxy-3-methylbut-2-enyl diphosphate + 2 reduced [2Fe-2S]-[ferredoxin] + 2 H(+)</text>
        <dbReference type="Rhea" id="RHEA:24825"/>
        <dbReference type="Rhea" id="RHEA-COMP:10000"/>
        <dbReference type="Rhea" id="RHEA-COMP:10001"/>
        <dbReference type="ChEBI" id="CHEBI:15377"/>
        <dbReference type="ChEBI" id="CHEBI:15378"/>
        <dbReference type="ChEBI" id="CHEBI:33737"/>
        <dbReference type="ChEBI" id="CHEBI:33738"/>
        <dbReference type="ChEBI" id="CHEBI:57623"/>
        <dbReference type="ChEBI" id="CHEBI:128753"/>
        <dbReference type="EC" id="1.17.7.4"/>
    </reaction>
</comment>
<comment type="cofactor">
    <cofactor evidence="1">
        <name>[4Fe-4S] cluster</name>
        <dbReference type="ChEBI" id="CHEBI:49883"/>
    </cofactor>
    <text evidence="1">Binds 1 [4Fe-4S] cluster per subunit.</text>
</comment>
<comment type="pathway">
    <text evidence="1">Isoprenoid biosynthesis; dimethylallyl diphosphate biosynthesis; dimethylallyl diphosphate from (2E)-4-hydroxy-3-methylbutenyl diphosphate: step 1/1.</text>
</comment>
<comment type="pathway">
    <text evidence="1">Isoprenoid biosynthesis; isopentenyl diphosphate biosynthesis via DXP pathway; isopentenyl diphosphate from 1-deoxy-D-xylulose 5-phosphate: step 6/6.</text>
</comment>
<comment type="subunit">
    <text evidence="1">Homodimer.</text>
</comment>
<comment type="similarity">
    <text evidence="1">Belongs to the IspH family.</text>
</comment>
<keyword id="KW-0004">4Fe-4S</keyword>
<keyword id="KW-0408">Iron</keyword>
<keyword id="KW-0411">Iron-sulfur</keyword>
<keyword id="KW-0414">Isoprene biosynthesis</keyword>
<keyword id="KW-0479">Metal-binding</keyword>
<keyword id="KW-0560">Oxidoreductase</keyword>
<feature type="chain" id="PRO_0000128904" description="4-hydroxy-3-methylbut-2-enyl diphosphate reductase">
    <location>
        <begin position="1"/>
        <end position="317"/>
    </location>
</feature>
<feature type="active site" description="Proton donor" evidence="1">
    <location>
        <position position="127"/>
    </location>
</feature>
<feature type="binding site" evidence="1">
    <location>
        <position position="12"/>
    </location>
    <ligand>
        <name>[4Fe-4S] cluster</name>
        <dbReference type="ChEBI" id="CHEBI:49883"/>
    </ligand>
</feature>
<feature type="binding site" evidence="1">
    <location>
        <position position="41"/>
    </location>
    <ligand>
        <name>(2E)-4-hydroxy-3-methylbut-2-enyl diphosphate</name>
        <dbReference type="ChEBI" id="CHEBI:128753"/>
    </ligand>
</feature>
<feature type="binding site" evidence="1">
    <location>
        <position position="41"/>
    </location>
    <ligand>
        <name>dimethylallyl diphosphate</name>
        <dbReference type="ChEBI" id="CHEBI:57623"/>
    </ligand>
</feature>
<feature type="binding site" evidence="1">
    <location>
        <position position="41"/>
    </location>
    <ligand>
        <name>isopentenyl diphosphate</name>
        <dbReference type="ChEBI" id="CHEBI:128769"/>
    </ligand>
</feature>
<feature type="binding site" evidence="1">
    <location>
        <position position="74"/>
    </location>
    <ligand>
        <name>(2E)-4-hydroxy-3-methylbut-2-enyl diphosphate</name>
        <dbReference type="ChEBI" id="CHEBI:128753"/>
    </ligand>
</feature>
<feature type="binding site" evidence="1">
    <location>
        <position position="74"/>
    </location>
    <ligand>
        <name>dimethylallyl diphosphate</name>
        <dbReference type="ChEBI" id="CHEBI:57623"/>
    </ligand>
</feature>
<feature type="binding site" evidence="1">
    <location>
        <position position="74"/>
    </location>
    <ligand>
        <name>isopentenyl diphosphate</name>
        <dbReference type="ChEBI" id="CHEBI:128769"/>
    </ligand>
</feature>
<feature type="binding site" evidence="1">
    <location>
        <position position="97"/>
    </location>
    <ligand>
        <name>[4Fe-4S] cluster</name>
        <dbReference type="ChEBI" id="CHEBI:49883"/>
    </ligand>
</feature>
<feature type="binding site" evidence="1">
    <location>
        <position position="125"/>
    </location>
    <ligand>
        <name>(2E)-4-hydroxy-3-methylbut-2-enyl diphosphate</name>
        <dbReference type="ChEBI" id="CHEBI:128753"/>
    </ligand>
</feature>
<feature type="binding site" evidence="1">
    <location>
        <position position="125"/>
    </location>
    <ligand>
        <name>dimethylallyl diphosphate</name>
        <dbReference type="ChEBI" id="CHEBI:57623"/>
    </ligand>
</feature>
<feature type="binding site" evidence="1">
    <location>
        <position position="125"/>
    </location>
    <ligand>
        <name>isopentenyl diphosphate</name>
        <dbReference type="ChEBI" id="CHEBI:128769"/>
    </ligand>
</feature>
<feature type="binding site" evidence="1">
    <location>
        <position position="168"/>
    </location>
    <ligand>
        <name>(2E)-4-hydroxy-3-methylbut-2-enyl diphosphate</name>
        <dbReference type="ChEBI" id="CHEBI:128753"/>
    </ligand>
</feature>
<feature type="binding site" evidence="1">
    <location>
        <position position="198"/>
    </location>
    <ligand>
        <name>[4Fe-4S] cluster</name>
        <dbReference type="ChEBI" id="CHEBI:49883"/>
    </ligand>
</feature>
<feature type="binding site" evidence="1">
    <location>
        <position position="226"/>
    </location>
    <ligand>
        <name>(2E)-4-hydroxy-3-methylbut-2-enyl diphosphate</name>
        <dbReference type="ChEBI" id="CHEBI:128753"/>
    </ligand>
</feature>
<feature type="binding site" evidence="1">
    <location>
        <position position="226"/>
    </location>
    <ligand>
        <name>dimethylallyl diphosphate</name>
        <dbReference type="ChEBI" id="CHEBI:57623"/>
    </ligand>
</feature>
<feature type="binding site" evidence="1">
    <location>
        <position position="226"/>
    </location>
    <ligand>
        <name>isopentenyl diphosphate</name>
        <dbReference type="ChEBI" id="CHEBI:128769"/>
    </ligand>
</feature>
<feature type="binding site" evidence="1">
    <location>
        <position position="227"/>
    </location>
    <ligand>
        <name>(2E)-4-hydroxy-3-methylbut-2-enyl diphosphate</name>
        <dbReference type="ChEBI" id="CHEBI:128753"/>
    </ligand>
</feature>
<feature type="binding site" evidence="1">
    <location>
        <position position="227"/>
    </location>
    <ligand>
        <name>dimethylallyl diphosphate</name>
        <dbReference type="ChEBI" id="CHEBI:57623"/>
    </ligand>
</feature>
<feature type="binding site" evidence="1">
    <location>
        <position position="227"/>
    </location>
    <ligand>
        <name>isopentenyl diphosphate</name>
        <dbReference type="ChEBI" id="CHEBI:128769"/>
    </ligand>
</feature>
<feature type="binding site" evidence="1">
    <location>
        <position position="228"/>
    </location>
    <ligand>
        <name>(2E)-4-hydroxy-3-methylbut-2-enyl diphosphate</name>
        <dbReference type="ChEBI" id="CHEBI:128753"/>
    </ligand>
</feature>
<feature type="binding site" evidence="1">
    <location>
        <position position="228"/>
    </location>
    <ligand>
        <name>dimethylallyl diphosphate</name>
        <dbReference type="ChEBI" id="CHEBI:57623"/>
    </ligand>
</feature>
<feature type="binding site" evidence="1">
    <location>
        <position position="228"/>
    </location>
    <ligand>
        <name>isopentenyl diphosphate</name>
        <dbReference type="ChEBI" id="CHEBI:128769"/>
    </ligand>
</feature>
<feature type="binding site" evidence="1">
    <location>
        <position position="270"/>
    </location>
    <ligand>
        <name>(2E)-4-hydroxy-3-methylbut-2-enyl diphosphate</name>
        <dbReference type="ChEBI" id="CHEBI:128753"/>
    </ligand>
</feature>
<feature type="binding site" evidence="1">
    <location>
        <position position="270"/>
    </location>
    <ligand>
        <name>dimethylallyl diphosphate</name>
        <dbReference type="ChEBI" id="CHEBI:57623"/>
    </ligand>
</feature>
<feature type="binding site" evidence="1">
    <location>
        <position position="270"/>
    </location>
    <ligand>
        <name>isopentenyl diphosphate</name>
        <dbReference type="ChEBI" id="CHEBI:128769"/>
    </ligand>
</feature>